<reference key="1">
    <citation type="journal article" date="2003" name="J. Biol. Chem.">
        <title>Cellular localization, oligomerization, and membrane association of the hereditary spastic paraplegia 3A (SPG3A) protein atlastin.</title>
        <authorList>
            <person name="Zhu P.-P."/>
            <person name="Patterson A."/>
            <person name="Lavoie B."/>
            <person name="Stadler J."/>
            <person name="Shoeb M."/>
            <person name="Patel R."/>
            <person name="Blackstone C."/>
        </authorList>
    </citation>
    <scope>NUCLEOTIDE SEQUENCE [MRNA]</scope>
    <scope>SUBCELLULAR LOCATION</scope>
    <scope>TISSUE SPECIFICITY</scope>
    <source>
        <strain>Sprague-Dawley</strain>
        <tissue>Brain</tissue>
    </source>
</reference>
<reference key="2">
    <citation type="journal article" date="2004" name="Genome Res.">
        <title>The status, quality, and expansion of the NIH full-length cDNA project: the Mammalian Gene Collection (MGC).</title>
        <authorList>
            <consortium name="The MGC Project Team"/>
        </authorList>
    </citation>
    <scope>NUCLEOTIDE SEQUENCE [LARGE SCALE MRNA]</scope>
    <source>
        <tissue>Brain</tissue>
    </source>
</reference>
<reference key="3">
    <citation type="journal article" date="2006" name="Hum. Mol. Genet.">
        <title>SPG3A protein atlastin-1 is enriched in growth cones and promotes axon elongation during neuronal development.</title>
        <authorList>
            <person name="Zhu P.-P."/>
            <person name="Soderblom C."/>
            <person name="Tao-Cheng J.-H."/>
            <person name="Stadler J."/>
            <person name="Blackstone C."/>
        </authorList>
    </citation>
    <scope>FUNCTION</scope>
    <scope>CATALYTIC ACTIVITY</scope>
    <scope>SUBCELLULAR LOCATION</scope>
    <scope>MUTAGENESIS OF ARG-217; ARG-239 AND HIS-258</scope>
    <scope>DEVELOPMENTAL STAGE</scope>
</reference>
<reference key="4">
    <citation type="journal article" date="2009" name="Cell">
        <title>A class of dynamin-like GTPases involved in the generation of the tubular ER network.</title>
        <authorList>
            <person name="Hu J."/>
            <person name="Shibata Y."/>
            <person name="Zhu P.-P."/>
            <person name="Voss C."/>
            <person name="Rismanchi N."/>
            <person name="Prinz W.A."/>
            <person name="Rapoport T.A."/>
            <person name="Blackstone C."/>
        </authorList>
    </citation>
    <scope>INTERACTION WITH REEP5; RTN3 AND RTN4</scope>
</reference>
<reference key="5">
    <citation type="journal article" date="2012" name="Nat. Commun.">
        <title>Quantitative maps of protein phosphorylation sites across 14 different rat organs and tissues.</title>
        <authorList>
            <person name="Lundby A."/>
            <person name="Secher A."/>
            <person name="Lage K."/>
            <person name="Nordsborg N.B."/>
            <person name="Dmytriyev A."/>
            <person name="Lundby C."/>
            <person name="Olsen J.V."/>
        </authorList>
    </citation>
    <scope>PHOSPHORYLATION [LARGE SCALE ANALYSIS] AT SER-10; SER-22 AND SER-23</scope>
    <scope>IDENTIFICATION BY MASS SPECTROMETRY [LARGE SCALE ANALYSIS]</scope>
</reference>
<reference key="6">
    <citation type="journal article" date="2014" name="Biochem. J.">
        <title>Arl6IP1 has the ability to shape the mammalian ER membrane in a reticulon-like fashion.</title>
        <authorList>
            <person name="Yamamoto Y."/>
            <person name="Yoshida A."/>
            <person name="Miyazaki N."/>
            <person name="Iwasaki K."/>
            <person name="Sakisaka T."/>
        </authorList>
    </citation>
    <scope>INTERACTION WITH ARL6IP1</scope>
</reference>
<dbReference type="EC" id="3.6.5.-" evidence="7"/>
<dbReference type="EMBL" id="AY581896">
    <property type="protein sequence ID" value="AAS89975.1"/>
    <property type="molecule type" value="mRNA"/>
</dbReference>
<dbReference type="EMBL" id="BC092645">
    <property type="protein sequence ID" value="AAH92645.1"/>
    <property type="molecule type" value="mRNA"/>
</dbReference>
<dbReference type="RefSeq" id="NP_001009831.1">
    <property type="nucleotide sequence ID" value="NM_001009831.2"/>
</dbReference>
<dbReference type="SMR" id="Q6PST4"/>
<dbReference type="BioGRID" id="263689">
    <property type="interactions" value="2"/>
</dbReference>
<dbReference type="FunCoup" id="Q6PST4">
    <property type="interactions" value="2990"/>
</dbReference>
<dbReference type="IntAct" id="Q6PST4">
    <property type="interactions" value="2"/>
</dbReference>
<dbReference type="MINT" id="Q6PST4"/>
<dbReference type="STRING" id="10116.ENSRNOP00000041993"/>
<dbReference type="iPTMnet" id="Q6PST4"/>
<dbReference type="PhosphoSitePlus" id="Q6PST4"/>
<dbReference type="SwissPalm" id="Q6PST4"/>
<dbReference type="jPOST" id="Q6PST4"/>
<dbReference type="PaxDb" id="10116-ENSRNOP00000041993"/>
<dbReference type="Ensembl" id="ENSRNOT00000046085.6">
    <property type="protein sequence ID" value="ENSRNOP00000041993.4"/>
    <property type="gene ID" value="ENSRNOG00000005063.8"/>
</dbReference>
<dbReference type="GeneID" id="362750"/>
<dbReference type="KEGG" id="rno:362750"/>
<dbReference type="UCSC" id="RGD:1359232">
    <property type="organism name" value="rat"/>
</dbReference>
<dbReference type="AGR" id="RGD:1359232"/>
<dbReference type="CTD" id="51062"/>
<dbReference type="RGD" id="1359232">
    <property type="gene designation" value="Atl1"/>
</dbReference>
<dbReference type="eggNOG" id="KOG2037">
    <property type="taxonomic scope" value="Eukaryota"/>
</dbReference>
<dbReference type="GeneTree" id="ENSGT00940000158704"/>
<dbReference type="HOGENOM" id="CLU_021447_2_0_1"/>
<dbReference type="InParanoid" id="Q6PST4"/>
<dbReference type="OMA" id="GFIHNIW"/>
<dbReference type="OrthoDB" id="7788754at2759"/>
<dbReference type="PhylomeDB" id="Q6PST4"/>
<dbReference type="TreeFam" id="TF105251"/>
<dbReference type="PRO" id="PR:Q6PST4"/>
<dbReference type="Proteomes" id="UP000002494">
    <property type="component" value="Chromosome 6"/>
</dbReference>
<dbReference type="Bgee" id="ENSRNOG00000005063">
    <property type="expression patterns" value="Expressed in frontal cortex and 18 other cell types or tissues"/>
</dbReference>
<dbReference type="GO" id="GO:0030424">
    <property type="term" value="C:axon"/>
    <property type="evidence" value="ECO:0007669"/>
    <property type="project" value="UniProtKB-SubCell"/>
</dbReference>
<dbReference type="GO" id="GO:0005737">
    <property type="term" value="C:cytoplasm"/>
    <property type="evidence" value="ECO:0000266"/>
    <property type="project" value="RGD"/>
</dbReference>
<dbReference type="GO" id="GO:0005783">
    <property type="term" value="C:endoplasmic reticulum"/>
    <property type="evidence" value="ECO:0000314"/>
    <property type="project" value="UniProtKB"/>
</dbReference>
<dbReference type="GO" id="GO:0005789">
    <property type="term" value="C:endoplasmic reticulum membrane"/>
    <property type="evidence" value="ECO:0000314"/>
    <property type="project" value="UniProtKB"/>
</dbReference>
<dbReference type="GO" id="GO:0071782">
    <property type="term" value="C:endoplasmic reticulum tubular network"/>
    <property type="evidence" value="ECO:0000250"/>
    <property type="project" value="UniProtKB"/>
</dbReference>
<dbReference type="GO" id="GO:0098826">
    <property type="term" value="C:endoplasmic reticulum tubular network membrane"/>
    <property type="evidence" value="ECO:0000250"/>
    <property type="project" value="UniProtKB"/>
</dbReference>
<dbReference type="GO" id="GO:0005794">
    <property type="term" value="C:Golgi apparatus"/>
    <property type="evidence" value="ECO:0000314"/>
    <property type="project" value="UniProtKB"/>
</dbReference>
<dbReference type="GO" id="GO:1990674">
    <property type="term" value="C:Golgi cis cisterna membrane"/>
    <property type="evidence" value="ECO:0000314"/>
    <property type="project" value="UniProtKB"/>
</dbReference>
<dbReference type="GO" id="GO:0000139">
    <property type="term" value="C:Golgi membrane"/>
    <property type="evidence" value="ECO:0000314"/>
    <property type="project" value="UniProtKB"/>
</dbReference>
<dbReference type="GO" id="GO:0016020">
    <property type="term" value="C:membrane"/>
    <property type="evidence" value="ECO:0000266"/>
    <property type="project" value="RGD"/>
</dbReference>
<dbReference type="GO" id="GO:0005525">
    <property type="term" value="F:GTP binding"/>
    <property type="evidence" value="ECO:0000315"/>
    <property type="project" value="UniProtKB"/>
</dbReference>
<dbReference type="GO" id="GO:0003924">
    <property type="term" value="F:GTPase activity"/>
    <property type="evidence" value="ECO:0000314"/>
    <property type="project" value="UniProtKB"/>
</dbReference>
<dbReference type="GO" id="GO:0140523">
    <property type="term" value="F:GTPase-dependent fusogenic activity"/>
    <property type="evidence" value="ECO:0000250"/>
    <property type="project" value="UniProtKB"/>
</dbReference>
<dbReference type="GO" id="GO:0042802">
    <property type="term" value="F:identical protein binding"/>
    <property type="evidence" value="ECO:0000250"/>
    <property type="project" value="UniProtKB"/>
</dbReference>
<dbReference type="GO" id="GO:0007409">
    <property type="term" value="P:axonogenesis"/>
    <property type="evidence" value="ECO:0000315"/>
    <property type="project" value="UniProtKB"/>
</dbReference>
<dbReference type="GO" id="GO:0016320">
    <property type="term" value="P:endoplasmic reticulum membrane fusion"/>
    <property type="evidence" value="ECO:0000250"/>
    <property type="project" value="UniProtKB"/>
</dbReference>
<dbReference type="GO" id="GO:0007029">
    <property type="term" value="P:endoplasmic reticulum organization"/>
    <property type="evidence" value="ECO:0000266"/>
    <property type="project" value="RGD"/>
</dbReference>
<dbReference type="GO" id="GO:1990809">
    <property type="term" value="P:endoplasmic reticulum tubular network membrane organization"/>
    <property type="evidence" value="ECO:0000250"/>
    <property type="project" value="UniProtKB"/>
</dbReference>
<dbReference type="GO" id="GO:0051260">
    <property type="term" value="P:protein homooligomerization"/>
    <property type="evidence" value="ECO:0000266"/>
    <property type="project" value="RGD"/>
</dbReference>
<dbReference type="CDD" id="cd01851">
    <property type="entry name" value="GBP"/>
    <property type="match status" value="1"/>
</dbReference>
<dbReference type="FunFam" id="1.20.58.420:FF:000001">
    <property type="entry name" value="Atlastin-1 isoform 1"/>
    <property type="match status" value="1"/>
</dbReference>
<dbReference type="FunFam" id="3.40.50.300:FF:000497">
    <property type="entry name" value="Atlastin-1 isoform 1"/>
    <property type="match status" value="1"/>
</dbReference>
<dbReference type="Gene3D" id="1.20.58.420">
    <property type="entry name" value="AHSP"/>
    <property type="match status" value="1"/>
</dbReference>
<dbReference type="Gene3D" id="3.40.50.300">
    <property type="entry name" value="P-loop containing nucleotide triphosphate hydrolases"/>
    <property type="match status" value="1"/>
</dbReference>
<dbReference type="InterPro" id="IPR030386">
    <property type="entry name" value="G_GB1_RHD3_dom"/>
</dbReference>
<dbReference type="InterPro" id="IPR036543">
    <property type="entry name" value="Guanylate-bd_C_sf"/>
</dbReference>
<dbReference type="InterPro" id="IPR015894">
    <property type="entry name" value="Guanylate-bd_N"/>
</dbReference>
<dbReference type="InterPro" id="IPR027417">
    <property type="entry name" value="P-loop_NTPase"/>
</dbReference>
<dbReference type="PANTHER" id="PTHR10751">
    <property type="entry name" value="GUANYLATE BINDING PROTEIN"/>
    <property type="match status" value="1"/>
</dbReference>
<dbReference type="Pfam" id="PF02263">
    <property type="entry name" value="GBP"/>
    <property type="match status" value="1"/>
</dbReference>
<dbReference type="SUPFAM" id="SSF48340">
    <property type="entry name" value="Interferon-induced guanylate-binding protein 1 (GBP1), C-terminal domain"/>
    <property type="match status" value="1"/>
</dbReference>
<dbReference type="SUPFAM" id="SSF52540">
    <property type="entry name" value="P-loop containing nucleoside triphosphate hydrolases"/>
    <property type="match status" value="1"/>
</dbReference>
<dbReference type="PROSITE" id="PS51715">
    <property type="entry name" value="G_GB1_RHD3"/>
    <property type="match status" value="1"/>
</dbReference>
<proteinExistence type="evidence at protein level"/>
<sequence length="558" mass="63375">MAKSRRDRNSWGGFSEKSSDWSSEEEEPVRKAGPVQVLIVKDDHSFELDEAALNRILLSEAVRDKEVVAVSVAGAFRKGKSFLMDFMLRYMYNQESVDWVGDYNEPLTGFSWRGGSERETTGIQIWSEVFLINKLDGKKVAVLLMDTQGTFDSQSTLRDSATVFALSTMISSIQVYNLSQNVQEDDLQHLQLFTEYGRLAMEETFLKPFQSLIFLVRDWSFPYEFSYGADGGAKFLEKRLKVSGNQHEELQNVRKHIHSCFTNISCFLLPHPGLKVATNPNFDGKLKEIDDEFIKNLKILIPWLLSPESLDIKEINGNKITCRGLLEYFKAYIKIYQGEELPHPKSMLQATAEANNLAAVATAKDTYNKKMEEICGGDKPFLAPNDLQTKHLQLKEDSVKLFRGVKKMGGEEFSRRYLQQLESEIDELYIQYIKHNDSKNIFHAARTPATLFVVIFITYVIAGVTGFIGLDIIASLCNMIMGLTLITLCTWAYIRYSGEYRELGAVIDQVAAALWDQGSTNEALYKLYSAAATHRHLYQQAFPAPKSEPTEQPEKKKI</sequence>
<organism>
    <name type="scientific">Rattus norvegicus</name>
    <name type="common">Rat</name>
    <dbReference type="NCBI Taxonomy" id="10116"/>
    <lineage>
        <taxon>Eukaryota</taxon>
        <taxon>Metazoa</taxon>
        <taxon>Chordata</taxon>
        <taxon>Craniata</taxon>
        <taxon>Vertebrata</taxon>
        <taxon>Euteleostomi</taxon>
        <taxon>Mammalia</taxon>
        <taxon>Eutheria</taxon>
        <taxon>Euarchontoglires</taxon>
        <taxon>Glires</taxon>
        <taxon>Rodentia</taxon>
        <taxon>Myomorpha</taxon>
        <taxon>Muroidea</taxon>
        <taxon>Muridae</taxon>
        <taxon>Murinae</taxon>
        <taxon>Rattus</taxon>
    </lineage>
</organism>
<feature type="chain" id="PRO_0000384814" description="Atlastin-1">
    <location>
        <begin position="1"/>
        <end position="558"/>
    </location>
</feature>
<feature type="topological domain" description="Cytoplasmic" evidence="2">
    <location>
        <begin position="1"/>
        <end position="449"/>
    </location>
</feature>
<feature type="transmembrane region" description="Helical" evidence="3">
    <location>
        <begin position="450"/>
        <end position="470"/>
    </location>
</feature>
<feature type="topological domain" description="Lumenal" evidence="2">
    <location>
        <position position="471"/>
    </location>
</feature>
<feature type="transmembrane region" description="Helical" evidence="3">
    <location>
        <begin position="472"/>
        <end position="492"/>
    </location>
</feature>
<feature type="topological domain" description="Cytoplasmic" evidence="2">
    <location>
        <begin position="493"/>
        <end position="558"/>
    </location>
</feature>
<feature type="domain" description="GB1/RHD3-type G" evidence="4">
    <location>
        <begin position="64"/>
        <end position="309"/>
    </location>
</feature>
<feature type="region of interest" description="N-terminal hypervariable region (HVR)" evidence="2">
    <location>
        <begin position="1"/>
        <end position="34"/>
    </location>
</feature>
<feature type="region of interest" description="Disordered" evidence="5">
    <location>
        <begin position="1"/>
        <end position="29"/>
    </location>
</feature>
<feature type="region of interest" description="3HB (three-helix bundle) domain" evidence="2">
    <location>
        <begin position="347"/>
        <end position="438"/>
    </location>
</feature>
<feature type="region of interest" description="Linker" evidence="2">
    <location>
        <begin position="439"/>
        <end position="447"/>
    </location>
</feature>
<feature type="region of interest" description="Autoinhibitory domain" evidence="2">
    <location>
        <begin position="521"/>
        <end position="558"/>
    </location>
</feature>
<feature type="coiled-coil region" evidence="3">
    <location>
        <begin position="412"/>
        <end position="439"/>
    </location>
</feature>
<feature type="binding site" evidence="2">
    <location>
        <position position="77"/>
    </location>
    <ligand>
        <name>GDP</name>
        <dbReference type="ChEBI" id="CHEBI:58189"/>
    </ligand>
</feature>
<feature type="binding site" evidence="2">
    <location>
        <position position="77"/>
    </location>
    <ligand>
        <name>GTP</name>
        <dbReference type="ChEBI" id="CHEBI:37565"/>
    </ligand>
</feature>
<feature type="binding site" evidence="2">
    <location>
        <position position="78"/>
    </location>
    <ligand>
        <name>GDP</name>
        <dbReference type="ChEBI" id="CHEBI:58189"/>
    </ligand>
</feature>
<feature type="binding site" evidence="2">
    <location>
        <position position="78"/>
    </location>
    <ligand>
        <name>GTP</name>
        <dbReference type="ChEBI" id="CHEBI:37565"/>
    </ligand>
</feature>
<feature type="binding site" evidence="2">
    <location>
        <position position="79"/>
    </location>
    <ligand>
        <name>GDP</name>
        <dbReference type="ChEBI" id="CHEBI:58189"/>
    </ligand>
</feature>
<feature type="binding site" evidence="2">
    <location>
        <position position="79"/>
    </location>
    <ligand>
        <name>GTP</name>
        <dbReference type="ChEBI" id="CHEBI:37565"/>
    </ligand>
</feature>
<feature type="binding site" evidence="2">
    <location>
        <position position="80"/>
    </location>
    <ligand>
        <name>GDP</name>
        <dbReference type="ChEBI" id="CHEBI:58189"/>
    </ligand>
</feature>
<feature type="binding site" evidence="2">
    <location>
        <position position="80"/>
    </location>
    <ligand>
        <name>GTP</name>
        <dbReference type="ChEBI" id="CHEBI:37565"/>
    </ligand>
</feature>
<feature type="binding site" evidence="2">
    <location>
        <position position="81"/>
    </location>
    <ligand>
        <name>GDP</name>
        <dbReference type="ChEBI" id="CHEBI:58189"/>
    </ligand>
</feature>
<feature type="binding site" evidence="2">
    <location>
        <position position="81"/>
    </location>
    <ligand>
        <name>GTP</name>
        <dbReference type="ChEBI" id="CHEBI:37565"/>
    </ligand>
</feature>
<feature type="binding site" evidence="2">
    <location>
        <position position="81"/>
    </location>
    <ligand>
        <name>Mg(2+)</name>
        <dbReference type="ChEBI" id="CHEBI:18420"/>
    </ligand>
</feature>
<feature type="binding site" evidence="2">
    <location>
        <position position="82"/>
    </location>
    <ligand>
        <name>GDP</name>
        <dbReference type="ChEBI" id="CHEBI:58189"/>
    </ligand>
</feature>
<feature type="binding site" evidence="2">
    <location>
        <position position="82"/>
    </location>
    <ligand>
        <name>GTP</name>
        <dbReference type="ChEBI" id="CHEBI:37565"/>
    </ligand>
</feature>
<feature type="binding site" evidence="2">
    <location>
        <position position="148"/>
    </location>
    <ligand>
        <name>GDP</name>
        <dbReference type="ChEBI" id="CHEBI:58189"/>
    </ligand>
</feature>
<feature type="binding site" evidence="2">
    <location>
        <position position="217"/>
    </location>
    <ligand>
        <name>GDP</name>
        <dbReference type="ChEBI" id="CHEBI:58189"/>
    </ligand>
</feature>
<feature type="binding site" evidence="2">
    <location>
        <position position="217"/>
    </location>
    <ligand>
        <name>GTP</name>
        <dbReference type="ChEBI" id="CHEBI:37565"/>
    </ligand>
</feature>
<feature type="binding site" evidence="2">
    <location>
        <position position="218"/>
    </location>
    <ligand>
        <name>GDP</name>
        <dbReference type="ChEBI" id="CHEBI:58189"/>
    </ligand>
</feature>
<feature type="binding site" evidence="2">
    <location>
        <position position="218"/>
    </location>
    <ligand>
        <name>GTP</name>
        <dbReference type="ChEBI" id="CHEBI:37565"/>
    </ligand>
</feature>
<feature type="binding site" evidence="2">
    <location>
        <position position="276"/>
    </location>
    <ligand>
        <name>GDP</name>
        <dbReference type="ChEBI" id="CHEBI:58189"/>
    </ligand>
</feature>
<feature type="binding site" evidence="2">
    <location>
        <position position="276"/>
    </location>
    <ligand>
        <name>GTP</name>
        <dbReference type="ChEBI" id="CHEBI:37565"/>
    </ligand>
</feature>
<feature type="binding site" evidence="2">
    <location>
        <position position="279"/>
    </location>
    <ligand>
        <name>GDP</name>
        <dbReference type="ChEBI" id="CHEBI:58189"/>
    </ligand>
</feature>
<feature type="modified residue" description="Phosphoserine" evidence="14">
    <location>
        <position position="10"/>
    </location>
</feature>
<feature type="modified residue" description="Phosphoserine" evidence="14">
    <location>
        <position position="22"/>
    </location>
</feature>
<feature type="modified residue" description="Phosphoserine" evidence="14">
    <location>
        <position position="23"/>
    </location>
</feature>
<feature type="modified residue" description="N6-acetyllysine" evidence="1">
    <location>
        <position position="395"/>
    </location>
</feature>
<feature type="mutagenesis site" description="Loss of GTPase activity. No effect on oligomerization." evidence="7">
    <original>R</original>
    <variation>Q</variation>
    <location>
        <position position="217"/>
    </location>
</feature>
<feature type="mutagenesis site" description="Loss of GTPase activity. No effect on oligomerization." evidence="7">
    <original>R</original>
    <variation>C</variation>
    <location>
        <position position="239"/>
    </location>
</feature>
<feature type="mutagenesis site" description="Loss of GTPase activity. No effect on oligomerization." evidence="7">
    <original>H</original>
    <variation>R</variation>
    <location>
        <position position="258"/>
    </location>
</feature>
<evidence type="ECO:0000250" key="1">
    <source>
        <dbReference type="UniProtKB" id="Q6DD88"/>
    </source>
</evidence>
<evidence type="ECO:0000250" key="2">
    <source>
        <dbReference type="UniProtKB" id="Q8WXF7"/>
    </source>
</evidence>
<evidence type="ECO:0000255" key="3"/>
<evidence type="ECO:0000255" key="4">
    <source>
        <dbReference type="PROSITE-ProRule" id="PRU01052"/>
    </source>
</evidence>
<evidence type="ECO:0000256" key="5">
    <source>
        <dbReference type="SAM" id="MobiDB-lite"/>
    </source>
</evidence>
<evidence type="ECO:0000269" key="6">
    <source>
    </source>
</evidence>
<evidence type="ECO:0000269" key="7">
    <source>
    </source>
</evidence>
<evidence type="ECO:0000269" key="8">
    <source>
    </source>
</evidence>
<evidence type="ECO:0000269" key="9">
    <source>
    </source>
</evidence>
<evidence type="ECO:0000303" key="10">
    <source>
    </source>
</evidence>
<evidence type="ECO:0000305" key="11">
    <source>
    </source>
</evidence>
<evidence type="ECO:0000305" key="12">
    <source>
    </source>
</evidence>
<evidence type="ECO:0000312" key="13">
    <source>
        <dbReference type="RGD" id="1359232"/>
    </source>
</evidence>
<evidence type="ECO:0007744" key="14">
    <source>
    </source>
</evidence>
<protein>
    <recommendedName>
        <fullName evidence="10">Atlastin-1</fullName>
        <ecNumber evidence="7">3.6.5.-</ecNumber>
    </recommendedName>
    <alternativeName>
        <fullName evidence="11">Spastic paraplegia 3A homolog</fullName>
    </alternativeName>
</protein>
<comment type="function">
    <text evidence="2 7">Atlastin-1 (ATL1) is a membrane-anchored GTPase that mediates the GTP-dependent fusion of endoplasmic reticulum (ER) membranes, maintaining the continuous ER network. It facilitates the formation of three-way junctions where ER tubules intersect (PubMed:16537571). Two atlastin-1 on neighboring ER tubules bind GTP and form loose homodimers through the GB1/RHD3-type G domains and 3HB regions. Upon GTP hydrolysis, the 3HB regions tighten, pulling the membranes together to drive their fusion. After fusion, the homodimer disassembles upon release of inorganic phosphate (Pi). Subsequently, GDP dissociates, resetting the monomers to a conformation ready for a new fusion cycle (By similarity). May also regulate more or less directly Golgi biogenesis (PubMed:16537571). Indirectly regulates axonal development (PubMed:16537571).</text>
</comment>
<comment type="catalytic activity">
    <reaction evidence="7">
        <text>GTP + H2O = GDP + phosphate + H(+)</text>
        <dbReference type="Rhea" id="RHEA:19669"/>
        <dbReference type="ChEBI" id="CHEBI:15377"/>
        <dbReference type="ChEBI" id="CHEBI:15378"/>
        <dbReference type="ChEBI" id="CHEBI:37565"/>
        <dbReference type="ChEBI" id="CHEBI:43474"/>
        <dbReference type="ChEBI" id="CHEBI:58189"/>
    </reaction>
    <physiologicalReaction direction="left-to-right" evidence="12">
        <dbReference type="Rhea" id="RHEA:19670"/>
    </physiologicalReaction>
</comment>
<comment type="subunit">
    <text evidence="2 8 9">Monomeric and homodimeric. The homodimer, transiently formed by two molecules on opposing membranes, is the active form mediating ER membrane fusion (By similarity). Interacts with REEP1, REEP5, RTN3 and RTN4 (via the transmembrane region); these proteins are involved in endoplasmic reticulum tubular network organization (PubMed:19665976). Interacts with ZFYVE27; both proteins are involved in endoplasmic reticulum tubular network organization (By similarity). Interacts with ARL6IP1; both proteins are involved in endoplasmic reticulum tubular network organization (PubMed:24262037). Interacts with SPAST; the interaction is direct, could recruit SPAST to Golgi membranes. Interacts (via N-terminal region) with MAP4K4 (via CNH regulatory domain). May interact with TMED2. Interacts with CPT1C (By similarity).</text>
</comment>
<comment type="interaction">
    <interactant intactId="EBI-2410213">
        <id>Q6PST4</id>
    </interactant>
    <interactant intactId="EBI-919989">
        <id>Q9JK11-1</id>
        <label>Rtn4</label>
    </interactant>
    <organismsDiffer>false</organismsDiffer>
    <experiments>6</experiments>
</comment>
<comment type="subcellular location">
    <subcellularLocation>
        <location evidence="6">Endoplasmic reticulum membrane</location>
        <topology evidence="2">Multi-pass membrane protein</topology>
    </subcellularLocation>
    <subcellularLocation>
        <location evidence="6">Golgi apparatus membrane</location>
        <topology evidence="2">Multi-pass membrane protein</topology>
    </subcellularLocation>
    <subcellularLocation>
        <location evidence="7">Cell projection</location>
        <location evidence="7">Axon</location>
    </subcellularLocation>
    <text evidence="6">Localizes to endoplasmic reticulum tubular network.</text>
</comment>
<comment type="tissue specificity">
    <text evidence="6">Detected in brain where it is abundant in lamina V of the cerebral cortex. Also expressed within the hippocampus, mainly in pyramidal neurons in CA1 and CA3. Weakly expressed in the striatum and more robustly in amygdala and several thalamic nuclei. Also detected in several mesopontine nuclei (at protein level).</text>
</comment>
<comment type="developmental stage">
    <text evidence="7">Expression increases gradually from 18 dpc through adulthood.</text>
</comment>
<comment type="domain">
    <text evidence="2">The N-terminal hypervariable region (HVR) regulates ATL1-mediated membrane tethering by organizing ATL1 into a lattice structure on the same membrane. It does not affect GTP hydrolysis or membrane fusion. It has no effect on the GTP hydrolysis and fusion steps.</text>
</comment>
<comment type="domain">
    <text evidence="2">The GB1/RHD3-type G domain mediates GTP-binding and hydrolysis as well as homodimerization.</text>
</comment>
<comment type="domain">
    <text evidence="2">The two three-helix bundle (3HB) regions in the homodimer are loosely associated initially, but they tighten upon GTP hydrolysis, facilitating the fusion of membranes.</text>
</comment>
<comment type="domain">
    <text evidence="2">The C-terminal autoinhibitory domain negatively regulates the GTPase-dependent fusogenic activity without affecting GTP-binding.</text>
</comment>
<comment type="PTM">
    <text evidence="2">Phosphorylated. Phosphorylation, by different kinases, of the N-terminal hypervariable region (HVR) regulates the ATL1-mediated membrane tethering step.</text>
</comment>
<comment type="similarity">
    <text evidence="4">Belongs to the TRAFAC class dynamin-like GTPase superfamily. GB1/RHD3 GTPase family. GB1 subfamily.</text>
</comment>
<keyword id="KW-0007">Acetylation</keyword>
<keyword id="KW-0966">Cell projection</keyword>
<keyword id="KW-0175">Coiled coil</keyword>
<keyword id="KW-0256">Endoplasmic reticulum</keyword>
<keyword id="KW-0333">Golgi apparatus</keyword>
<keyword id="KW-0342">GTP-binding</keyword>
<keyword id="KW-0378">Hydrolase</keyword>
<keyword id="KW-0460">Magnesium</keyword>
<keyword id="KW-0472">Membrane</keyword>
<keyword id="KW-0479">Metal-binding</keyword>
<keyword id="KW-0547">Nucleotide-binding</keyword>
<keyword id="KW-0597">Phosphoprotein</keyword>
<keyword id="KW-1185">Reference proteome</keyword>
<keyword id="KW-0812">Transmembrane</keyword>
<keyword id="KW-1133">Transmembrane helix</keyword>
<accession>Q6PST4</accession>
<gene>
    <name evidence="13" type="primary">Atl1</name>
    <name evidence="10" type="synonym">Spg3a</name>
</gene>
<name>ATLA1_RAT</name>